<comment type="function">
    <text evidence="1">Binds to 23S rRNA. Forms part of two intersubunit bridges in the 70S ribosome.</text>
</comment>
<comment type="subunit">
    <text evidence="1">Part of the 50S ribosomal subunit. Forms a cluster with proteins L3 and L19. In the 70S ribosome, L14 and L19 interact and together make contacts with the 16S rRNA in bridges B5 and B8.</text>
</comment>
<comment type="similarity">
    <text evidence="1">Belongs to the universal ribosomal protein uL14 family.</text>
</comment>
<organism>
    <name type="scientific">Thermotoga maritima (strain ATCC 43589 / DSM 3109 / JCM 10099 / NBRC 100826 / MSB8)</name>
    <dbReference type="NCBI Taxonomy" id="243274"/>
    <lineage>
        <taxon>Bacteria</taxon>
        <taxon>Thermotogati</taxon>
        <taxon>Thermotogota</taxon>
        <taxon>Thermotogae</taxon>
        <taxon>Thermotogales</taxon>
        <taxon>Thermotogaceae</taxon>
        <taxon>Thermotoga</taxon>
    </lineage>
</organism>
<accession>P38508</accession>
<gene>
    <name evidence="1" type="primary">rplN</name>
    <name type="ordered locus">TM_1490</name>
</gene>
<dbReference type="EMBL" id="Z21677">
    <property type="protein sequence ID" value="CAA79787.1"/>
    <property type="molecule type" value="Genomic_DNA"/>
</dbReference>
<dbReference type="EMBL" id="AE000512">
    <property type="protein sequence ID" value="AAD36556.1"/>
    <property type="molecule type" value="Genomic_DNA"/>
</dbReference>
<dbReference type="PIR" id="B72249">
    <property type="entry name" value="B72249"/>
</dbReference>
<dbReference type="RefSeq" id="NP_229290.1">
    <property type="nucleotide sequence ID" value="NC_000853.1"/>
</dbReference>
<dbReference type="RefSeq" id="WP_004081816.1">
    <property type="nucleotide sequence ID" value="NZ_CP011107.1"/>
</dbReference>
<dbReference type="SMR" id="P38508"/>
<dbReference type="FunCoup" id="P38508">
    <property type="interactions" value="361"/>
</dbReference>
<dbReference type="STRING" id="243274.TM_1490"/>
<dbReference type="PaxDb" id="243274-THEMA_06850"/>
<dbReference type="EnsemblBacteria" id="AAD36556">
    <property type="protein sequence ID" value="AAD36556"/>
    <property type="gene ID" value="TM_1490"/>
</dbReference>
<dbReference type="KEGG" id="tma:TM1490"/>
<dbReference type="KEGG" id="tmi:THEMA_06850"/>
<dbReference type="KEGG" id="tmm:Tmari_1498"/>
<dbReference type="KEGG" id="tmw:THMA_1522"/>
<dbReference type="eggNOG" id="COG0093">
    <property type="taxonomic scope" value="Bacteria"/>
</dbReference>
<dbReference type="InParanoid" id="P38508"/>
<dbReference type="OrthoDB" id="9806379at2"/>
<dbReference type="Proteomes" id="UP000008183">
    <property type="component" value="Chromosome"/>
</dbReference>
<dbReference type="GO" id="GO:0022625">
    <property type="term" value="C:cytosolic large ribosomal subunit"/>
    <property type="evidence" value="ECO:0000318"/>
    <property type="project" value="GO_Central"/>
</dbReference>
<dbReference type="GO" id="GO:0070180">
    <property type="term" value="F:large ribosomal subunit rRNA binding"/>
    <property type="evidence" value="ECO:0000318"/>
    <property type="project" value="GO_Central"/>
</dbReference>
<dbReference type="GO" id="GO:0003735">
    <property type="term" value="F:structural constituent of ribosome"/>
    <property type="evidence" value="ECO:0000318"/>
    <property type="project" value="GO_Central"/>
</dbReference>
<dbReference type="GO" id="GO:0006412">
    <property type="term" value="P:translation"/>
    <property type="evidence" value="ECO:0007669"/>
    <property type="project" value="UniProtKB-UniRule"/>
</dbReference>
<dbReference type="CDD" id="cd00337">
    <property type="entry name" value="Ribosomal_uL14"/>
    <property type="match status" value="1"/>
</dbReference>
<dbReference type="FunFam" id="2.40.150.20:FF:000001">
    <property type="entry name" value="50S ribosomal protein L14"/>
    <property type="match status" value="1"/>
</dbReference>
<dbReference type="Gene3D" id="2.40.150.20">
    <property type="entry name" value="Ribosomal protein L14"/>
    <property type="match status" value="1"/>
</dbReference>
<dbReference type="HAMAP" id="MF_01367">
    <property type="entry name" value="Ribosomal_uL14"/>
    <property type="match status" value="1"/>
</dbReference>
<dbReference type="InterPro" id="IPR000218">
    <property type="entry name" value="Ribosomal_uL14"/>
</dbReference>
<dbReference type="InterPro" id="IPR005745">
    <property type="entry name" value="Ribosomal_uL14_bac-type"/>
</dbReference>
<dbReference type="InterPro" id="IPR019972">
    <property type="entry name" value="Ribosomal_uL14_CS"/>
</dbReference>
<dbReference type="InterPro" id="IPR036853">
    <property type="entry name" value="Ribosomal_uL14_sf"/>
</dbReference>
<dbReference type="NCBIfam" id="TIGR01067">
    <property type="entry name" value="rplN_bact"/>
    <property type="match status" value="1"/>
</dbReference>
<dbReference type="PANTHER" id="PTHR11761">
    <property type="entry name" value="50S/60S RIBOSOMAL PROTEIN L14/L23"/>
    <property type="match status" value="1"/>
</dbReference>
<dbReference type="PANTHER" id="PTHR11761:SF3">
    <property type="entry name" value="LARGE RIBOSOMAL SUBUNIT PROTEIN UL14M"/>
    <property type="match status" value="1"/>
</dbReference>
<dbReference type="Pfam" id="PF00238">
    <property type="entry name" value="Ribosomal_L14"/>
    <property type="match status" value="1"/>
</dbReference>
<dbReference type="SMART" id="SM01374">
    <property type="entry name" value="Ribosomal_L14"/>
    <property type="match status" value="1"/>
</dbReference>
<dbReference type="SUPFAM" id="SSF50193">
    <property type="entry name" value="Ribosomal protein L14"/>
    <property type="match status" value="1"/>
</dbReference>
<dbReference type="PROSITE" id="PS00049">
    <property type="entry name" value="RIBOSOMAL_L14"/>
    <property type="match status" value="1"/>
</dbReference>
<proteinExistence type="inferred from homology"/>
<reference key="1">
    <citation type="journal article" date="1994" name="J. Bacteriol.">
        <title>Phylogenetic depth of S10 and spc operons: cloning and sequencing of a ribosomal protein gene cluster from the extremely thermophilic bacterium Thermotoga maritima.</title>
        <authorList>
            <person name="Sanangelantoni A.M."/>
            <person name="Bocchetta M."/>
            <person name="Cammarano P."/>
            <person name="Tiboni O."/>
        </authorList>
    </citation>
    <scope>NUCLEOTIDE SEQUENCE [GENOMIC DNA]</scope>
    <source>
        <strain>ATCC 43589 / DSM 3109 / JCM 10099 / NBRC 100826 / MSB8</strain>
    </source>
</reference>
<reference key="2">
    <citation type="journal article" date="1999" name="Nature">
        <title>Evidence for lateral gene transfer between Archaea and Bacteria from genome sequence of Thermotoga maritima.</title>
        <authorList>
            <person name="Nelson K.E."/>
            <person name="Clayton R.A."/>
            <person name="Gill S.R."/>
            <person name="Gwinn M.L."/>
            <person name="Dodson R.J."/>
            <person name="Haft D.H."/>
            <person name="Hickey E.K."/>
            <person name="Peterson J.D."/>
            <person name="Nelson W.C."/>
            <person name="Ketchum K.A."/>
            <person name="McDonald L.A."/>
            <person name="Utterback T.R."/>
            <person name="Malek J.A."/>
            <person name="Linher K.D."/>
            <person name="Garrett M.M."/>
            <person name="Stewart A.M."/>
            <person name="Cotton M.D."/>
            <person name="Pratt M.S."/>
            <person name="Phillips C.A."/>
            <person name="Richardson D.L."/>
            <person name="Heidelberg J.F."/>
            <person name="Sutton G.G."/>
            <person name="Fleischmann R.D."/>
            <person name="Eisen J.A."/>
            <person name="White O."/>
            <person name="Salzberg S.L."/>
            <person name="Smith H.O."/>
            <person name="Venter J.C."/>
            <person name="Fraser C.M."/>
        </authorList>
    </citation>
    <scope>NUCLEOTIDE SEQUENCE [LARGE SCALE GENOMIC DNA]</scope>
    <source>
        <strain>ATCC 43589 / DSM 3109 / JCM 10099 / NBRC 100826 / MSB8</strain>
    </source>
</reference>
<name>RL14_THEMA</name>
<evidence type="ECO:0000255" key="1">
    <source>
        <dbReference type="HAMAP-Rule" id="MF_01367"/>
    </source>
</evidence>
<evidence type="ECO:0000305" key="2"/>
<feature type="chain" id="PRO_0000128565" description="Large ribosomal subunit protein uL14">
    <location>
        <begin position="1"/>
        <end position="122"/>
    </location>
</feature>
<feature type="sequence conflict" description="In Ref. 1; CAA79787." evidence="2" ref="1">
    <original>V</original>
    <variation>I</variation>
    <location>
        <position position="21"/>
    </location>
</feature>
<keyword id="KW-1185">Reference proteome</keyword>
<keyword id="KW-0687">Ribonucleoprotein</keyword>
<keyword id="KW-0689">Ribosomal protein</keyword>
<keyword id="KW-0694">RNA-binding</keyword>
<keyword id="KW-0699">rRNA-binding</keyword>
<sequence length="122" mass="13702">MIQQETYLNVADNSGAKKLRVIRVIGGFHKKYGTVGDIVVCSVREAIPNSDVKKGDVVRAVIVRTKKEIRRNDGTYIRFDDNAAVLIDKFNAPRGTRIFGPVARELREKGFMKIVSLAPEVW</sequence>
<protein>
    <recommendedName>
        <fullName evidence="1">Large ribosomal subunit protein uL14</fullName>
    </recommendedName>
    <alternativeName>
        <fullName evidence="2">50S ribosomal protein L14</fullName>
    </alternativeName>
</protein>